<keyword id="KW-1185">Reference proteome</keyword>
<keyword id="KW-0687">Ribonucleoprotein</keyword>
<keyword id="KW-0689">Ribosomal protein</keyword>
<keyword id="KW-0694">RNA-binding</keyword>
<keyword id="KW-0699">rRNA-binding</keyword>
<evidence type="ECO:0000255" key="1">
    <source>
        <dbReference type="HAMAP-Rule" id="MF_00382"/>
    </source>
</evidence>
<evidence type="ECO:0000305" key="2"/>
<accession>Q3J5M3</accession>
<feature type="chain" id="PRO_0000243723" description="Large ribosomal subunit protein bL20">
    <location>
        <begin position="1"/>
        <end position="120"/>
    </location>
</feature>
<organism>
    <name type="scientific">Cereibacter sphaeroides (strain ATCC 17023 / DSM 158 / JCM 6121 / CCUG 31486 / LMG 2827 / NBRC 12203 / NCIMB 8253 / ATH 2.4.1.)</name>
    <name type="common">Rhodobacter sphaeroides</name>
    <dbReference type="NCBI Taxonomy" id="272943"/>
    <lineage>
        <taxon>Bacteria</taxon>
        <taxon>Pseudomonadati</taxon>
        <taxon>Pseudomonadota</taxon>
        <taxon>Alphaproteobacteria</taxon>
        <taxon>Rhodobacterales</taxon>
        <taxon>Paracoccaceae</taxon>
        <taxon>Cereibacter</taxon>
    </lineage>
</organism>
<name>RL20_CERS4</name>
<comment type="function">
    <text evidence="1">Binds directly to 23S ribosomal RNA and is necessary for the in vitro assembly process of the 50S ribosomal subunit. It is not involved in the protein synthesizing functions of that subunit.</text>
</comment>
<comment type="similarity">
    <text evidence="1">Belongs to the bacterial ribosomal protein bL20 family.</text>
</comment>
<protein>
    <recommendedName>
        <fullName evidence="1">Large ribosomal subunit protein bL20</fullName>
    </recommendedName>
    <alternativeName>
        <fullName evidence="2">50S ribosomal protein L20</fullName>
    </alternativeName>
</protein>
<proteinExistence type="inferred from homology"/>
<gene>
    <name evidence="1" type="primary">rplT</name>
    <name type="ordered locus">RHOS4_03430</name>
    <name type="ORF">RSP_1764</name>
</gene>
<reference key="1">
    <citation type="submission" date="2005-09" db="EMBL/GenBank/DDBJ databases">
        <title>Complete sequence of chromosome 1 of Rhodobacter sphaeroides 2.4.1.</title>
        <authorList>
            <person name="Copeland A."/>
            <person name="Lucas S."/>
            <person name="Lapidus A."/>
            <person name="Barry K."/>
            <person name="Detter J.C."/>
            <person name="Glavina T."/>
            <person name="Hammon N."/>
            <person name="Israni S."/>
            <person name="Pitluck S."/>
            <person name="Richardson P."/>
            <person name="Mackenzie C."/>
            <person name="Choudhary M."/>
            <person name="Larimer F."/>
            <person name="Hauser L.J."/>
            <person name="Land M."/>
            <person name="Donohue T.J."/>
            <person name="Kaplan S."/>
        </authorList>
    </citation>
    <scope>NUCLEOTIDE SEQUENCE [LARGE SCALE GENOMIC DNA]</scope>
    <source>
        <strain>ATCC 17023 / DSM 158 / JCM 6121 / CCUG 31486 / LMG 2827 / NBRC 12203 / NCIMB 8253 / ATH 2.4.1.</strain>
    </source>
</reference>
<dbReference type="EMBL" id="CP000143">
    <property type="protein sequence ID" value="ABA77911.1"/>
    <property type="molecule type" value="Genomic_DNA"/>
</dbReference>
<dbReference type="RefSeq" id="WP_002722591.1">
    <property type="nucleotide sequence ID" value="NZ_CP030271.1"/>
</dbReference>
<dbReference type="RefSeq" id="YP_351812.1">
    <property type="nucleotide sequence ID" value="NC_007493.2"/>
</dbReference>
<dbReference type="SMR" id="Q3J5M3"/>
<dbReference type="STRING" id="272943.RSP_1764"/>
<dbReference type="EnsemblBacteria" id="ABA77911">
    <property type="protein sequence ID" value="ABA77911"/>
    <property type="gene ID" value="RSP_1764"/>
</dbReference>
<dbReference type="GeneID" id="67445550"/>
<dbReference type="KEGG" id="rsp:RSP_1764"/>
<dbReference type="PATRIC" id="fig|272943.9.peg.643"/>
<dbReference type="eggNOG" id="COG0292">
    <property type="taxonomic scope" value="Bacteria"/>
</dbReference>
<dbReference type="OrthoDB" id="9808966at2"/>
<dbReference type="PhylomeDB" id="Q3J5M3"/>
<dbReference type="Proteomes" id="UP000002703">
    <property type="component" value="Chromosome 1"/>
</dbReference>
<dbReference type="GO" id="GO:1990904">
    <property type="term" value="C:ribonucleoprotein complex"/>
    <property type="evidence" value="ECO:0007669"/>
    <property type="project" value="UniProtKB-KW"/>
</dbReference>
<dbReference type="GO" id="GO:0005840">
    <property type="term" value="C:ribosome"/>
    <property type="evidence" value="ECO:0007669"/>
    <property type="project" value="UniProtKB-KW"/>
</dbReference>
<dbReference type="GO" id="GO:0019843">
    <property type="term" value="F:rRNA binding"/>
    <property type="evidence" value="ECO:0007669"/>
    <property type="project" value="UniProtKB-UniRule"/>
</dbReference>
<dbReference type="GO" id="GO:0003735">
    <property type="term" value="F:structural constituent of ribosome"/>
    <property type="evidence" value="ECO:0007669"/>
    <property type="project" value="InterPro"/>
</dbReference>
<dbReference type="GO" id="GO:0000027">
    <property type="term" value="P:ribosomal large subunit assembly"/>
    <property type="evidence" value="ECO:0007669"/>
    <property type="project" value="UniProtKB-UniRule"/>
</dbReference>
<dbReference type="GO" id="GO:0006412">
    <property type="term" value="P:translation"/>
    <property type="evidence" value="ECO:0007669"/>
    <property type="project" value="InterPro"/>
</dbReference>
<dbReference type="CDD" id="cd07026">
    <property type="entry name" value="Ribosomal_L20"/>
    <property type="match status" value="1"/>
</dbReference>
<dbReference type="FunFam" id="1.10.1900.20:FF:000001">
    <property type="entry name" value="50S ribosomal protein L20"/>
    <property type="match status" value="1"/>
</dbReference>
<dbReference type="Gene3D" id="6.10.160.10">
    <property type="match status" value="1"/>
</dbReference>
<dbReference type="Gene3D" id="1.10.1900.20">
    <property type="entry name" value="Ribosomal protein L20"/>
    <property type="match status" value="1"/>
</dbReference>
<dbReference type="HAMAP" id="MF_00382">
    <property type="entry name" value="Ribosomal_bL20"/>
    <property type="match status" value="1"/>
</dbReference>
<dbReference type="InterPro" id="IPR005813">
    <property type="entry name" value="Ribosomal_bL20"/>
</dbReference>
<dbReference type="InterPro" id="IPR049946">
    <property type="entry name" value="RIBOSOMAL_L20_CS"/>
</dbReference>
<dbReference type="InterPro" id="IPR035566">
    <property type="entry name" value="Ribosomal_protein_bL20_C"/>
</dbReference>
<dbReference type="NCBIfam" id="TIGR01032">
    <property type="entry name" value="rplT_bact"/>
    <property type="match status" value="1"/>
</dbReference>
<dbReference type="PANTHER" id="PTHR10986">
    <property type="entry name" value="39S RIBOSOMAL PROTEIN L20"/>
    <property type="match status" value="1"/>
</dbReference>
<dbReference type="Pfam" id="PF00453">
    <property type="entry name" value="Ribosomal_L20"/>
    <property type="match status" value="1"/>
</dbReference>
<dbReference type="PRINTS" id="PR00062">
    <property type="entry name" value="RIBOSOMALL20"/>
</dbReference>
<dbReference type="SUPFAM" id="SSF74731">
    <property type="entry name" value="Ribosomal protein L20"/>
    <property type="match status" value="1"/>
</dbReference>
<dbReference type="PROSITE" id="PS00937">
    <property type="entry name" value="RIBOSOMAL_L20"/>
    <property type="match status" value="1"/>
</dbReference>
<sequence>MSRVKSGKVTHARHRKVIKQAKGYYAARSTNFRTATQAVDKANQYATRDRKARKRNFRALWIQRINAAVRLFDIEMTYSRFINGLSKAGIEVDRKVLADLAVHEPEAFNAIAAQAKAALA</sequence>